<dbReference type="EMBL" id="BC092225">
    <property type="protein sequence ID" value="AAH92225.1"/>
    <property type="molecule type" value="mRNA"/>
</dbReference>
<dbReference type="CCDS" id="CCDS40606.1"/>
<dbReference type="RefSeq" id="NP_001014761.1">
    <property type="nucleotide sequence ID" value="NM_001014761.2"/>
</dbReference>
<dbReference type="SMR" id="Q56A07"/>
<dbReference type="BioGRID" id="215585">
    <property type="interactions" value="2"/>
</dbReference>
<dbReference type="FunCoup" id="Q56A07">
    <property type="interactions" value="556"/>
</dbReference>
<dbReference type="STRING" id="10090.ENSMUSP00000126826"/>
<dbReference type="BindingDB" id="Q56A07"/>
<dbReference type="ChEMBL" id="CHEMBL4630761"/>
<dbReference type="ChEMBL" id="CHEMBL4630764"/>
<dbReference type="ChEMBL" id="CHEMBL4630766"/>
<dbReference type="GlyCosmos" id="Q56A07">
    <property type="glycosylation" value="3 sites, No reported glycans"/>
</dbReference>
<dbReference type="GlyGen" id="Q56A07">
    <property type="glycosylation" value="3 sites"/>
</dbReference>
<dbReference type="iPTMnet" id="Q56A07"/>
<dbReference type="PhosphoSitePlus" id="Q56A07"/>
<dbReference type="SwissPalm" id="Q56A07"/>
<dbReference type="PaxDb" id="10090-ENSMUSP00000126826"/>
<dbReference type="ProteomicsDB" id="253412"/>
<dbReference type="ABCD" id="Q56A07">
    <property type="antibodies" value="1 sequenced antibody"/>
</dbReference>
<dbReference type="Antibodypedia" id="2511">
    <property type="antibodies" value="291 antibodies from 34 providers"/>
</dbReference>
<dbReference type="DNASU" id="72821"/>
<dbReference type="Ensembl" id="ENSMUST00000170998.9">
    <property type="protein sequence ID" value="ENSMUSP00000126826.2"/>
    <property type="gene ID" value="ENSMUSG00000070304.14"/>
</dbReference>
<dbReference type="GeneID" id="72821"/>
<dbReference type="KEGG" id="mmu:72821"/>
<dbReference type="UCSC" id="uc009pfg.1">
    <property type="organism name" value="mouse"/>
</dbReference>
<dbReference type="AGR" id="MGI:106921"/>
<dbReference type="CTD" id="6327"/>
<dbReference type="MGI" id="MGI:106921">
    <property type="gene designation" value="Scn2b"/>
</dbReference>
<dbReference type="VEuPathDB" id="HostDB:ENSMUSG00000070304"/>
<dbReference type="eggNOG" id="ENOG502R29H">
    <property type="taxonomic scope" value="Eukaryota"/>
</dbReference>
<dbReference type="GeneTree" id="ENSGT01030000234556"/>
<dbReference type="HOGENOM" id="CLU_090350_0_0_1"/>
<dbReference type="InParanoid" id="Q56A07"/>
<dbReference type="OMA" id="RLACTFN"/>
<dbReference type="OrthoDB" id="8750716at2759"/>
<dbReference type="PhylomeDB" id="Q56A07"/>
<dbReference type="TreeFam" id="TF331728"/>
<dbReference type="BioGRID-ORCS" id="72821">
    <property type="hits" value="2 hits in 76 CRISPR screens"/>
</dbReference>
<dbReference type="CD-CODE" id="CE726F99">
    <property type="entry name" value="Postsynaptic density"/>
</dbReference>
<dbReference type="PRO" id="PR:Q56A07"/>
<dbReference type="Proteomes" id="UP000000589">
    <property type="component" value="Chromosome 9"/>
</dbReference>
<dbReference type="RNAct" id="Q56A07">
    <property type="molecule type" value="protein"/>
</dbReference>
<dbReference type="Bgee" id="ENSMUSG00000070304">
    <property type="expression patterns" value="Expressed in cerebellum lobe and 194 other cell types or tissues"/>
</dbReference>
<dbReference type="ExpressionAtlas" id="Q56A07">
    <property type="expression patterns" value="baseline and differential"/>
</dbReference>
<dbReference type="GO" id="GO:0043194">
    <property type="term" value="C:axon initial segment"/>
    <property type="evidence" value="ECO:0007669"/>
    <property type="project" value="Ensembl"/>
</dbReference>
<dbReference type="GO" id="GO:0033268">
    <property type="term" value="C:node of Ranvier"/>
    <property type="evidence" value="ECO:0007669"/>
    <property type="project" value="Ensembl"/>
</dbReference>
<dbReference type="GO" id="GO:0030315">
    <property type="term" value="C:T-tubule"/>
    <property type="evidence" value="ECO:0000314"/>
    <property type="project" value="MGI"/>
</dbReference>
<dbReference type="GO" id="GO:0001518">
    <property type="term" value="C:voltage-gated sodium channel complex"/>
    <property type="evidence" value="ECO:0000250"/>
    <property type="project" value="UniProtKB"/>
</dbReference>
<dbReference type="GO" id="GO:0017080">
    <property type="term" value="F:sodium channel regulator activity"/>
    <property type="evidence" value="ECO:0007669"/>
    <property type="project" value="Ensembl"/>
</dbReference>
<dbReference type="GO" id="GO:1902282">
    <property type="term" value="F:voltage-gated potassium channel activity involved in ventricular cardiac muscle cell action potential repolarization"/>
    <property type="evidence" value="ECO:0000315"/>
    <property type="project" value="MGI"/>
</dbReference>
<dbReference type="GO" id="GO:0086006">
    <property type="term" value="F:voltage-gated sodium channel activity involved in cardiac muscle cell action potential"/>
    <property type="evidence" value="ECO:0000315"/>
    <property type="project" value="MGI"/>
</dbReference>
<dbReference type="GO" id="GO:0061337">
    <property type="term" value="P:cardiac conduction"/>
    <property type="evidence" value="ECO:0000315"/>
    <property type="project" value="MGI"/>
</dbReference>
<dbReference type="GO" id="GO:0010467">
    <property type="term" value="P:gene expression"/>
    <property type="evidence" value="ECO:0000315"/>
    <property type="project" value="MGI"/>
</dbReference>
<dbReference type="GO" id="GO:0007399">
    <property type="term" value="P:nervous system development"/>
    <property type="evidence" value="ECO:0007669"/>
    <property type="project" value="Ensembl"/>
</dbReference>
<dbReference type="GO" id="GO:0010765">
    <property type="term" value="P:positive regulation of sodium ion transport"/>
    <property type="evidence" value="ECO:0007669"/>
    <property type="project" value="Ensembl"/>
</dbReference>
<dbReference type="GO" id="GO:0060371">
    <property type="term" value="P:regulation of atrial cardiac muscle cell membrane depolarization"/>
    <property type="evidence" value="ECO:0007669"/>
    <property type="project" value="Ensembl"/>
</dbReference>
<dbReference type="GO" id="GO:0086091">
    <property type="term" value="P:regulation of heart rate by cardiac conduction"/>
    <property type="evidence" value="ECO:0007669"/>
    <property type="project" value="Ensembl"/>
</dbReference>
<dbReference type="GO" id="GO:0009408">
    <property type="term" value="P:response to heat"/>
    <property type="evidence" value="ECO:0000315"/>
    <property type="project" value="MGI"/>
</dbReference>
<dbReference type="GO" id="GO:0046684">
    <property type="term" value="P:response to pyrethroid"/>
    <property type="evidence" value="ECO:0007669"/>
    <property type="project" value="Ensembl"/>
</dbReference>
<dbReference type="GO" id="GO:0006814">
    <property type="term" value="P:sodium ion transport"/>
    <property type="evidence" value="ECO:0000315"/>
    <property type="project" value="MGI"/>
</dbReference>
<dbReference type="Gene3D" id="2.60.40.10">
    <property type="entry name" value="Immunoglobulins"/>
    <property type="match status" value="1"/>
</dbReference>
<dbReference type="InterPro" id="IPR007110">
    <property type="entry name" value="Ig-like_dom"/>
</dbReference>
<dbReference type="InterPro" id="IPR036179">
    <property type="entry name" value="Ig-like_dom_sf"/>
</dbReference>
<dbReference type="InterPro" id="IPR013783">
    <property type="entry name" value="Ig-like_fold"/>
</dbReference>
<dbReference type="InterPro" id="IPR003599">
    <property type="entry name" value="Ig_sub"/>
</dbReference>
<dbReference type="InterPro" id="IPR013106">
    <property type="entry name" value="Ig_V-set"/>
</dbReference>
<dbReference type="InterPro" id="IPR000920">
    <property type="entry name" value="Myelin_P0-rel"/>
</dbReference>
<dbReference type="PANTHER" id="PTHR13869">
    <property type="entry name" value="MYELIN P0 RELATED"/>
    <property type="match status" value="1"/>
</dbReference>
<dbReference type="PANTHER" id="PTHR13869:SF3">
    <property type="entry name" value="SODIUM CHANNEL SUBUNIT BETA-2"/>
    <property type="match status" value="1"/>
</dbReference>
<dbReference type="Pfam" id="PF07686">
    <property type="entry name" value="V-set"/>
    <property type="match status" value="1"/>
</dbReference>
<dbReference type="PRINTS" id="PR00213">
    <property type="entry name" value="MYELINP0"/>
</dbReference>
<dbReference type="SMART" id="SM00409">
    <property type="entry name" value="IG"/>
    <property type="match status" value="1"/>
</dbReference>
<dbReference type="SUPFAM" id="SSF48726">
    <property type="entry name" value="Immunoglobulin"/>
    <property type="match status" value="1"/>
</dbReference>
<dbReference type="PROSITE" id="PS50835">
    <property type="entry name" value="IG_LIKE"/>
    <property type="match status" value="1"/>
</dbReference>
<organism>
    <name type="scientific">Mus musculus</name>
    <name type="common">Mouse</name>
    <dbReference type="NCBI Taxonomy" id="10090"/>
    <lineage>
        <taxon>Eukaryota</taxon>
        <taxon>Metazoa</taxon>
        <taxon>Chordata</taxon>
        <taxon>Craniata</taxon>
        <taxon>Vertebrata</taxon>
        <taxon>Euteleostomi</taxon>
        <taxon>Mammalia</taxon>
        <taxon>Eutheria</taxon>
        <taxon>Euarchontoglires</taxon>
        <taxon>Glires</taxon>
        <taxon>Rodentia</taxon>
        <taxon>Myomorpha</taxon>
        <taxon>Muroidea</taxon>
        <taxon>Muridae</taxon>
        <taxon>Murinae</taxon>
        <taxon>Mus</taxon>
        <taxon>Mus</taxon>
    </lineage>
</organism>
<comment type="function">
    <text evidence="1">Regulatory subunit of multiple voltage-gated sodium (Nav) channels directly mediating the depolarization of excitable membranes. Navs, also called VGSCs (voltage-gated sodium channels) or VDSCs (voltage-dependent sodium channels), operate by switching between closed and open conformations depending on the voltage difference across the membrane. In the open conformation they allow Na(+) ions to selectively pass through the pore, along their electrochemical gradient. The influx of Na+ ions provokes membrane depolarization, initiating the propagation of electrical signals throughout cells and tissues. The accessory beta subunits participate in localization and functional modulation of the Nav channels. Modulates the activity of SCN1A/Nav1.1, SCN2A/Nav1.2, SCN2A/Nav1.3, SCN5A/Nav1.5, SCN8A/Nav1.6, SCN9A/Nav1.7 and SCN10A/Nav1.8.</text>
</comment>
<comment type="subunit">
    <text evidence="1 2">A voltage-gated sodium (Nav) channel consists of an ion-conducting pore-forming alpha subunit functional on its own that is regulated by one or more beta subunits. The beta subunit SCN2B is disulfide-linked to the pore-forming alpha subunit. Interacts with SCN1A; regulatory subunit of SCN1A/Nav1.1. Interacts with SCN2A; regulatory subunit of SCN2A/Nav1.2. Interacts with SCN3A; regulatory subunit of SCN3A/Nav1.3. Interacts with SCN5A; regulatory subunit of SCN5A/Nav1.5. Interacts with SCN8A; regulatory subunit of SCN8A/Nav1.6. Interacts with SCN9A; regulatory subunit of SCN9A/Nav1.7 (By similarity). Interacts with SCN10A; regulatory subunit of SCN10A/Nav1.8. Interacts with TNR; may play a crucial role in clustering and regulation of activity of SCN2B-containing Nav channels at nodes of Ranvier (By similarity).</text>
</comment>
<comment type="subcellular location">
    <subcellularLocation>
        <location evidence="2">Cell membrane</location>
        <topology evidence="2">Single-pass type I membrane protein</topology>
    </subcellularLocation>
    <subcellularLocation>
        <location evidence="2">Cell projection</location>
        <location evidence="2">Axon</location>
    </subcellularLocation>
    <text evidence="2">Clusters at the axon initial segment and node of Ranvier, the specialized neuronal subcellular domains involved in action potentials generation and propagation.</text>
</comment>
<comment type="similarity">
    <text evidence="6">Belongs to the sodium channel auxiliary subunit SCN2B (TC 8.A.17) family.</text>
</comment>
<name>SCN2B_MOUSE</name>
<evidence type="ECO:0000250" key="1">
    <source>
        <dbReference type="UniProtKB" id="O60939"/>
    </source>
</evidence>
<evidence type="ECO:0000250" key="2">
    <source>
        <dbReference type="UniProtKB" id="P54900"/>
    </source>
</evidence>
<evidence type="ECO:0000255" key="3"/>
<evidence type="ECO:0000255" key="4">
    <source>
        <dbReference type="PROSITE-ProRule" id="PRU00114"/>
    </source>
</evidence>
<evidence type="ECO:0000256" key="5">
    <source>
        <dbReference type="SAM" id="MobiDB-lite"/>
    </source>
</evidence>
<evidence type="ECO:0000305" key="6"/>
<evidence type="ECO:0000312" key="7">
    <source>
        <dbReference type="MGI" id="MGI:106921"/>
    </source>
</evidence>
<reference key="1">
    <citation type="journal article" date="2004" name="Genome Res.">
        <title>The status, quality, and expansion of the NIH full-length cDNA project: the Mammalian Gene Collection (MGC).</title>
        <authorList>
            <consortium name="The MGC Project Team"/>
        </authorList>
    </citation>
    <scope>NUCLEOTIDE SEQUENCE [LARGE SCALE MRNA]</scope>
    <source>
        <strain>C57BL/6J</strain>
        <tissue>Brain</tissue>
    </source>
</reference>
<reference key="2">
    <citation type="submission" date="2007-04" db="UniProtKB">
        <authorList>
            <person name="Lubec G."/>
            <person name="Kang S.U."/>
        </authorList>
    </citation>
    <scope>PROTEIN SEQUENCE OF 99-107</scope>
    <scope>IDENTIFICATION BY MASS SPECTROMETRY</scope>
    <source>
        <strain>C57BL/6J</strain>
        <tissue>Brain</tissue>
    </source>
</reference>
<reference key="3">
    <citation type="journal article" date="2010" name="Cell">
        <title>A tissue-specific atlas of mouse protein phosphorylation and expression.</title>
        <authorList>
            <person name="Huttlin E.L."/>
            <person name="Jedrychowski M.P."/>
            <person name="Elias J.E."/>
            <person name="Goswami T."/>
            <person name="Rad R."/>
            <person name="Beausoleil S.A."/>
            <person name="Villen J."/>
            <person name="Haas W."/>
            <person name="Sowa M.E."/>
            <person name="Gygi S.P."/>
        </authorList>
    </citation>
    <scope>IDENTIFICATION BY MASS SPECTROMETRY [LARGE SCALE ANALYSIS]</scope>
    <source>
        <tissue>Brain</tissue>
    </source>
</reference>
<protein>
    <recommendedName>
        <fullName evidence="1">Sodium channel regulatory subunit beta-2</fullName>
    </recommendedName>
</protein>
<sequence>MHRDAWLPRPAFSLTGLSLFFSLVPPGRSMEVTAPTTLSVLNGSDTRLPCTFNSCYTVNHKQFSLNWTYQECNNCTEEMFLQFRMKIINLKLERFGDRVEFSGNPSKYDVSVTLKNVQLEDEGIYNCYITNPPDRHRGHGKIYLQVLLEVPPERDSTVAVIVGASVGGFLAVVILVLMVVKCVRRKKEQKLSTDDLKTEEEGKMDGEGNAEDGTK</sequence>
<keyword id="KW-1003">Cell membrane</keyword>
<keyword id="KW-0966">Cell projection</keyword>
<keyword id="KW-0903">Direct protein sequencing</keyword>
<keyword id="KW-1015">Disulfide bond</keyword>
<keyword id="KW-0325">Glycoprotein</keyword>
<keyword id="KW-0393">Immunoglobulin domain</keyword>
<keyword id="KW-0406">Ion transport</keyword>
<keyword id="KW-0472">Membrane</keyword>
<keyword id="KW-0597">Phosphoprotein</keyword>
<keyword id="KW-1185">Reference proteome</keyword>
<keyword id="KW-0732">Signal</keyword>
<keyword id="KW-0915">Sodium</keyword>
<keyword id="KW-0739">Sodium transport</keyword>
<keyword id="KW-0812">Transmembrane</keyword>
<keyword id="KW-1133">Transmembrane helix</keyword>
<keyword id="KW-0813">Transport</keyword>
<proteinExistence type="evidence at protein level"/>
<accession>Q56A07</accession>
<feature type="signal peptide" evidence="2">
    <location>
        <begin position="1"/>
        <end position="29"/>
    </location>
</feature>
<feature type="chain" id="PRO_0000045177" description="Sodium channel regulatory subunit beta-2">
    <location>
        <begin position="30"/>
        <end position="215"/>
    </location>
</feature>
<feature type="topological domain" description="Extracellular" evidence="1">
    <location>
        <begin position="30"/>
        <end position="157"/>
    </location>
</feature>
<feature type="transmembrane region" description="Helical" evidence="1">
    <location>
        <begin position="158"/>
        <end position="179"/>
    </location>
</feature>
<feature type="topological domain" description="Cytoplasmic" evidence="1">
    <location>
        <begin position="180"/>
        <end position="215"/>
    </location>
</feature>
<feature type="domain" description="Ig-like C2-type" evidence="3">
    <location>
        <begin position="32"/>
        <end position="154"/>
    </location>
</feature>
<feature type="region of interest" description="Disordered" evidence="5">
    <location>
        <begin position="188"/>
        <end position="215"/>
    </location>
</feature>
<feature type="compositionally biased region" description="Basic and acidic residues" evidence="5">
    <location>
        <begin position="189"/>
        <end position="215"/>
    </location>
</feature>
<feature type="site" description="Binds SCN2A" evidence="1">
    <location>
        <position position="56"/>
    </location>
</feature>
<feature type="site" description="Binds SCN2A" evidence="1">
    <location>
        <position position="135"/>
    </location>
</feature>
<feature type="modified residue" description="Phosphoserine" evidence="2">
    <location>
        <position position="192"/>
    </location>
</feature>
<feature type="glycosylation site" description="N-linked (GlcNAc...) asparagine" evidence="3">
    <location>
        <position position="42"/>
    </location>
</feature>
<feature type="glycosylation site" description="N-linked (GlcNAc...) asparagine" evidence="3">
    <location>
        <position position="66"/>
    </location>
</feature>
<feature type="glycosylation site" description="N-linked (GlcNAc...) asparagine" evidence="3">
    <location>
        <position position="74"/>
    </location>
</feature>
<feature type="disulfide bond" evidence="1 4">
    <location>
        <begin position="50"/>
        <end position="127"/>
    </location>
</feature>
<feature type="disulfide bond" description="Interchain; with alpha subunit" evidence="1 4">
    <location>
        <position position="55"/>
    </location>
</feature>
<feature type="disulfide bond" evidence="1">
    <location>
        <begin position="72"/>
        <end position="75"/>
    </location>
</feature>
<gene>
    <name evidence="7" type="primary">Scn2b</name>
    <name type="synonym">Gm183</name>
</gene>